<sequence length="150" mass="16432">MNDRARARKLADRIKVVVAETLERRVKDPRLGFVTITDARVTPDLREATVFYTVLGDDTALAETAAALESAKGVLRAEVGRQTQVRFTPTLTFVPDTVPRQARQIEELLARARAADREVAERAKSAQPAGEPDPYRFDGAAAADDDEPAT</sequence>
<keyword id="KW-0963">Cytoplasm</keyword>
<keyword id="KW-1185">Reference proteome</keyword>
<keyword id="KW-0690">Ribosome biogenesis</keyword>
<reference key="1">
    <citation type="journal article" date="2009" name="Genome Res.">
        <title>Complete genome of the cellulolytic thermophile Acidothermus cellulolyticus 11B provides insights into its ecophysiological and evolutionary adaptations.</title>
        <authorList>
            <person name="Barabote R.D."/>
            <person name="Xie G."/>
            <person name="Leu D.H."/>
            <person name="Normand P."/>
            <person name="Necsulea A."/>
            <person name="Daubin V."/>
            <person name="Medigue C."/>
            <person name="Adney W.S."/>
            <person name="Xu X.C."/>
            <person name="Lapidus A."/>
            <person name="Parales R.E."/>
            <person name="Detter C."/>
            <person name="Pujic P."/>
            <person name="Bruce D."/>
            <person name="Lavire C."/>
            <person name="Challacombe J.F."/>
            <person name="Brettin T.S."/>
            <person name="Berry A.M."/>
        </authorList>
    </citation>
    <scope>NUCLEOTIDE SEQUENCE [LARGE SCALE GENOMIC DNA]</scope>
    <source>
        <strain>ATCC 43068 / DSM 8971 / 11B</strain>
    </source>
</reference>
<gene>
    <name evidence="1" type="primary">rbfA</name>
    <name type="ordered locus">Acel_1513</name>
</gene>
<name>RBFA_ACIC1</name>
<proteinExistence type="inferred from homology"/>
<accession>A0LV25</accession>
<dbReference type="EMBL" id="CP000481">
    <property type="protein sequence ID" value="ABK53285.1"/>
    <property type="molecule type" value="Genomic_DNA"/>
</dbReference>
<dbReference type="RefSeq" id="WP_011720348.1">
    <property type="nucleotide sequence ID" value="NC_008578.1"/>
</dbReference>
<dbReference type="SMR" id="A0LV25"/>
<dbReference type="FunCoup" id="A0LV25">
    <property type="interactions" value="17"/>
</dbReference>
<dbReference type="STRING" id="351607.Acel_1513"/>
<dbReference type="KEGG" id="ace:Acel_1513"/>
<dbReference type="eggNOG" id="COG0858">
    <property type="taxonomic scope" value="Bacteria"/>
</dbReference>
<dbReference type="HOGENOM" id="CLU_089475_0_0_11"/>
<dbReference type="InParanoid" id="A0LV25"/>
<dbReference type="OrthoDB" id="307788at2"/>
<dbReference type="Proteomes" id="UP000008221">
    <property type="component" value="Chromosome"/>
</dbReference>
<dbReference type="GO" id="GO:0005829">
    <property type="term" value="C:cytosol"/>
    <property type="evidence" value="ECO:0007669"/>
    <property type="project" value="TreeGrafter"/>
</dbReference>
<dbReference type="GO" id="GO:0043024">
    <property type="term" value="F:ribosomal small subunit binding"/>
    <property type="evidence" value="ECO:0007669"/>
    <property type="project" value="TreeGrafter"/>
</dbReference>
<dbReference type="GO" id="GO:0030490">
    <property type="term" value="P:maturation of SSU-rRNA"/>
    <property type="evidence" value="ECO:0007669"/>
    <property type="project" value="UniProtKB-UniRule"/>
</dbReference>
<dbReference type="Gene3D" id="3.30.300.20">
    <property type="match status" value="1"/>
</dbReference>
<dbReference type="HAMAP" id="MF_00003">
    <property type="entry name" value="RbfA"/>
    <property type="match status" value="1"/>
</dbReference>
<dbReference type="InterPro" id="IPR015946">
    <property type="entry name" value="KH_dom-like_a/b"/>
</dbReference>
<dbReference type="InterPro" id="IPR000238">
    <property type="entry name" value="RbfA"/>
</dbReference>
<dbReference type="InterPro" id="IPR023799">
    <property type="entry name" value="RbfA_dom_sf"/>
</dbReference>
<dbReference type="InterPro" id="IPR020053">
    <property type="entry name" value="Ribosome-bd_factorA_CS"/>
</dbReference>
<dbReference type="NCBIfam" id="TIGR00082">
    <property type="entry name" value="rbfA"/>
    <property type="match status" value="1"/>
</dbReference>
<dbReference type="PANTHER" id="PTHR33515">
    <property type="entry name" value="RIBOSOME-BINDING FACTOR A, CHLOROPLASTIC-RELATED"/>
    <property type="match status" value="1"/>
</dbReference>
<dbReference type="PANTHER" id="PTHR33515:SF1">
    <property type="entry name" value="RIBOSOME-BINDING FACTOR A, CHLOROPLASTIC-RELATED"/>
    <property type="match status" value="1"/>
</dbReference>
<dbReference type="Pfam" id="PF02033">
    <property type="entry name" value="RBFA"/>
    <property type="match status" value="1"/>
</dbReference>
<dbReference type="SUPFAM" id="SSF89919">
    <property type="entry name" value="Ribosome-binding factor A, RbfA"/>
    <property type="match status" value="1"/>
</dbReference>
<dbReference type="PROSITE" id="PS01319">
    <property type="entry name" value="RBFA"/>
    <property type="match status" value="1"/>
</dbReference>
<protein>
    <recommendedName>
        <fullName evidence="1">Ribosome-binding factor A</fullName>
    </recommendedName>
</protein>
<evidence type="ECO:0000255" key="1">
    <source>
        <dbReference type="HAMAP-Rule" id="MF_00003"/>
    </source>
</evidence>
<evidence type="ECO:0000256" key="2">
    <source>
        <dbReference type="SAM" id="MobiDB-lite"/>
    </source>
</evidence>
<comment type="function">
    <text evidence="1">One of several proteins that assist in the late maturation steps of the functional core of the 30S ribosomal subunit. Associates with free 30S ribosomal subunits (but not with 30S subunits that are part of 70S ribosomes or polysomes). Required for efficient processing of 16S rRNA. May interact with the 5'-terminal helix region of 16S rRNA.</text>
</comment>
<comment type="subunit">
    <text evidence="1">Monomer. Binds 30S ribosomal subunits, but not 50S ribosomal subunits or 70S ribosomes.</text>
</comment>
<comment type="subcellular location">
    <subcellularLocation>
        <location evidence="1">Cytoplasm</location>
    </subcellularLocation>
</comment>
<comment type="similarity">
    <text evidence="1">Belongs to the RbfA family.</text>
</comment>
<feature type="chain" id="PRO_1000000060" description="Ribosome-binding factor A">
    <location>
        <begin position="1"/>
        <end position="150"/>
    </location>
</feature>
<feature type="region of interest" description="Disordered" evidence="2">
    <location>
        <begin position="119"/>
        <end position="150"/>
    </location>
</feature>
<organism>
    <name type="scientific">Acidothermus cellulolyticus (strain ATCC 43068 / DSM 8971 / 11B)</name>
    <dbReference type="NCBI Taxonomy" id="351607"/>
    <lineage>
        <taxon>Bacteria</taxon>
        <taxon>Bacillati</taxon>
        <taxon>Actinomycetota</taxon>
        <taxon>Actinomycetes</taxon>
        <taxon>Acidothermales</taxon>
        <taxon>Acidothermaceae</taxon>
        <taxon>Acidothermus</taxon>
    </lineage>
</organism>